<organism>
    <name type="scientific">Rattus norvegicus</name>
    <name type="common">Rat</name>
    <dbReference type="NCBI Taxonomy" id="10116"/>
    <lineage>
        <taxon>Eukaryota</taxon>
        <taxon>Metazoa</taxon>
        <taxon>Chordata</taxon>
        <taxon>Craniata</taxon>
        <taxon>Vertebrata</taxon>
        <taxon>Euteleostomi</taxon>
        <taxon>Mammalia</taxon>
        <taxon>Eutheria</taxon>
        <taxon>Euarchontoglires</taxon>
        <taxon>Glires</taxon>
        <taxon>Rodentia</taxon>
        <taxon>Myomorpha</taxon>
        <taxon>Muroidea</taxon>
        <taxon>Muridae</taxon>
        <taxon>Murinae</taxon>
        <taxon>Rattus</taxon>
    </lineage>
</organism>
<protein>
    <recommendedName>
        <fullName>SH3 domain-containing YSC84-like protein 1</fullName>
    </recommendedName>
</protein>
<accession>B0BNA1</accession>
<sequence>MNNPIPSNLKSEAKKAAKILREFTEITSRNGPDKIIPAHVIAKAKGLAVLSVIKAGFLVTARGGSGIVLARLPDGKWSAPSAIGIAGLGGGFEIGIEVSDLVIILNYDRAVEAFAKGGNLTLGGNFTVAVGPLGRNLEGNVSLRSSAAVFTYCKSRGLFAGISLEGSCLIERKETNRKFYCQDIRAYDILFGDVPQPAQAEDLYEILNSFTEKYETEGQRINLKKVAREQRKAKELPPKPSSRPQPSRPPVQLNAGSQSNRNEYKLYPELSSYHEKTGSLSQPIEVTALYSFEGQQPGDLNFQAGDRIIVISKTDSNFDWWEGKLRGQTGIFPANYVTMN</sequence>
<reference key="1">
    <citation type="journal article" date="2004" name="Genome Res.">
        <title>The status, quality, and expansion of the NIH full-length cDNA project: the Mammalian Gene Collection (MGC).</title>
        <authorList>
            <consortium name="The MGC Project Team"/>
        </authorList>
    </citation>
    <scope>NUCLEOTIDE SEQUENCE [LARGE SCALE MRNA]</scope>
    <source>
        <tissue>Spleen</tissue>
    </source>
</reference>
<proteinExistence type="evidence at transcript level"/>
<gene>
    <name type="primary">Sh3yl1</name>
</gene>
<feature type="chain" id="PRO_0000341563" description="SH3 domain-containing YSC84-like protein 1">
    <location>
        <begin position="1"/>
        <end position="340"/>
    </location>
</feature>
<feature type="domain" description="SH3" evidence="2">
    <location>
        <begin position="281"/>
        <end position="340"/>
    </location>
</feature>
<feature type="region of interest" description="Disordered" evidence="3">
    <location>
        <begin position="224"/>
        <end position="259"/>
    </location>
</feature>
<feature type="compositionally biased region" description="Basic and acidic residues" evidence="3">
    <location>
        <begin position="226"/>
        <end position="237"/>
    </location>
</feature>
<feature type="compositionally biased region" description="Pro residues" evidence="3">
    <location>
        <begin position="238"/>
        <end position="249"/>
    </location>
</feature>
<keyword id="KW-1185">Reference proteome</keyword>
<keyword id="KW-0728">SH3 domain</keyword>
<dbReference type="EMBL" id="BC158742">
    <property type="protein sequence ID" value="AAI58743.1"/>
    <property type="molecule type" value="mRNA"/>
</dbReference>
<dbReference type="RefSeq" id="NP_001102175.1">
    <property type="nucleotide sequence ID" value="NM_001108705.2"/>
</dbReference>
<dbReference type="SMR" id="B0BNA1"/>
<dbReference type="FunCoup" id="B0BNA1">
    <property type="interactions" value="268"/>
</dbReference>
<dbReference type="STRING" id="10116.ENSRNOP00000060428"/>
<dbReference type="PhosphoSitePlus" id="B0BNA1"/>
<dbReference type="PaxDb" id="10116-ENSRNOP00000060428"/>
<dbReference type="GeneID" id="362724"/>
<dbReference type="KEGG" id="rno:362724"/>
<dbReference type="UCSC" id="RGD:1306440">
    <property type="organism name" value="rat"/>
</dbReference>
<dbReference type="AGR" id="RGD:1306440"/>
<dbReference type="CTD" id="26751"/>
<dbReference type="RGD" id="1306440">
    <property type="gene designation" value="Sh3yl1"/>
</dbReference>
<dbReference type="VEuPathDB" id="HostDB:ENSRNOG00000005522"/>
<dbReference type="eggNOG" id="KOG1843">
    <property type="taxonomic scope" value="Eukaryota"/>
</dbReference>
<dbReference type="HOGENOM" id="CLU_015320_2_1_1"/>
<dbReference type="InParanoid" id="B0BNA1"/>
<dbReference type="OrthoDB" id="443981at2759"/>
<dbReference type="PhylomeDB" id="B0BNA1"/>
<dbReference type="TreeFam" id="TF331022"/>
<dbReference type="PRO" id="PR:B0BNA1"/>
<dbReference type="Proteomes" id="UP000002494">
    <property type="component" value="Chromosome 6"/>
</dbReference>
<dbReference type="Bgee" id="ENSRNOG00000005522">
    <property type="expression patterns" value="Expressed in duodenum and 20 other cell types or tissues"/>
</dbReference>
<dbReference type="GO" id="GO:0032587">
    <property type="term" value="C:ruffle membrane"/>
    <property type="evidence" value="ECO:0000266"/>
    <property type="project" value="RGD"/>
</dbReference>
<dbReference type="GO" id="GO:0019902">
    <property type="term" value="F:phosphatase binding"/>
    <property type="evidence" value="ECO:0000266"/>
    <property type="project" value="RGD"/>
</dbReference>
<dbReference type="GO" id="GO:0035091">
    <property type="term" value="F:phosphatidylinositol binding"/>
    <property type="evidence" value="ECO:0000266"/>
    <property type="project" value="RGD"/>
</dbReference>
<dbReference type="GO" id="GO:0006661">
    <property type="term" value="P:phosphatidylinositol biosynthetic process"/>
    <property type="evidence" value="ECO:0000266"/>
    <property type="project" value="RGD"/>
</dbReference>
<dbReference type="GO" id="GO:1900027">
    <property type="term" value="P:regulation of ruffle assembly"/>
    <property type="evidence" value="ECO:0000266"/>
    <property type="project" value="RGD"/>
</dbReference>
<dbReference type="CDD" id="cd11841">
    <property type="entry name" value="SH3_SH3YL1_like"/>
    <property type="match status" value="1"/>
</dbReference>
<dbReference type="CDD" id="cd11525">
    <property type="entry name" value="SYLF_SH3YL1_like"/>
    <property type="match status" value="1"/>
</dbReference>
<dbReference type="FunFam" id="2.30.30.40:FF:000100">
    <property type="entry name" value="SH3 domain-containing YSC84-like protein 1"/>
    <property type="match status" value="1"/>
</dbReference>
<dbReference type="Gene3D" id="2.30.30.40">
    <property type="entry name" value="SH3 Domains"/>
    <property type="match status" value="1"/>
</dbReference>
<dbReference type="InterPro" id="IPR036028">
    <property type="entry name" value="SH3-like_dom_sf"/>
</dbReference>
<dbReference type="InterPro" id="IPR001452">
    <property type="entry name" value="SH3_domain"/>
</dbReference>
<dbReference type="InterPro" id="IPR051702">
    <property type="entry name" value="SH3_domain_YSC84-like"/>
</dbReference>
<dbReference type="InterPro" id="IPR035511">
    <property type="entry name" value="SH3YL1_SH3"/>
</dbReference>
<dbReference type="InterPro" id="IPR033643">
    <property type="entry name" value="SYLF_SH3YL1-like"/>
</dbReference>
<dbReference type="InterPro" id="IPR007461">
    <property type="entry name" value="Ysc84_actin-binding"/>
</dbReference>
<dbReference type="PANTHER" id="PTHR15629:SF2">
    <property type="entry name" value="SH3 DOMAIN-CONTAINING YSC84-LIKE PROTEIN 1"/>
    <property type="match status" value="1"/>
</dbReference>
<dbReference type="PANTHER" id="PTHR15629">
    <property type="entry name" value="SH3YL1 PROTEIN"/>
    <property type="match status" value="1"/>
</dbReference>
<dbReference type="Pfam" id="PF14604">
    <property type="entry name" value="SH3_9"/>
    <property type="match status" value="1"/>
</dbReference>
<dbReference type="Pfam" id="PF04366">
    <property type="entry name" value="Ysc84"/>
    <property type="match status" value="1"/>
</dbReference>
<dbReference type="PRINTS" id="PR00452">
    <property type="entry name" value="SH3DOMAIN"/>
</dbReference>
<dbReference type="SMART" id="SM00326">
    <property type="entry name" value="SH3"/>
    <property type="match status" value="1"/>
</dbReference>
<dbReference type="SUPFAM" id="SSF50044">
    <property type="entry name" value="SH3-domain"/>
    <property type="match status" value="1"/>
</dbReference>
<dbReference type="PROSITE" id="PS50002">
    <property type="entry name" value="SH3"/>
    <property type="match status" value="1"/>
</dbReference>
<evidence type="ECO:0000250" key="1"/>
<evidence type="ECO:0000255" key="2">
    <source>
        <dbReference type="PROSITE-ProRule" id="PRU00192"/>
    </source>
</evidence>
<evidence type="ECO:0000256" key="3">
    <source>
        <dbReference type="SAM" id="MobiDB-lite"/>
    </source>
</evidence>
<evidence type="ECO:0000305" key="4"/>
<comment type="subunit">
    <text evidence="1">Interacts with SH3D19.</text>
</comment>
<comment type="similarity">
    <text evidence="4">Belongs to the SH3YL1 family.</text>
</comment>
<name>SH3Y1_RAT</name>